<feature type="propeptide" id="PRO_0000027723">
    <location>
        <begin position="1"/>
        <end position="51"/>
    </location>
</feature>
<feature type="chain" id="PRO_0000027724" description="Enteropeptidase non-catalytic mini chain">
    <location>
        <begin position="52"/>
        <end position="117"/>
    </location>
</feature>
<feature type="chain" id="PRO_0000027725" description="Enteropeptidase non-catalytic heavy chain">
    <location>
        <begin position="118"/>
        <end position="799"/>
    </location>
</feature>
<feature type="chain" id="PRO_0000027726" description="Enteropeptidase catalytic light chain">
    <location>
        <begin position="800"/>
        <end position="1034"/>
    </location>
</feature>
<feature type="topological domain" description="Cytoplasmic" evidence="2">
    <location>
        <begin position="2"/>
        <end position="18"/>
    </location>
</feature>
<feature type="transmembrane region" description="Helical; Signal-anchor for type II membrane protein" evidence="2">
    <location>
        <begin position="19"/>
        <end position="47"/>
    </location>
</feature>
<feature type="topological domain" description="Extracellular" evidence="2">
    <location>
        <begin position="48"/>
        <end position="1034"/>
    </location>
</feature>
<feature type="domain" description="SEA" evidence="6">
    <location>
        <begin position="54"/>
        <end position="169"/>
    </location>
</feature>
<feature type="domain" description="LDL-receptor class A 1" evidence="4">
    <location>
        <begin position="197"/>
        <end position="238"/>
    </location>
</feature>
<feature type="domain" description="CUB 1" evidence="3">
    <location>
        <begin position="240"/>
        <end position="349"/>
    </location>
</feature>
<feature type="domain" description="MAM" evidence="5">
    <location>
        <begin position="357"/>
        <end position="519"/>
    </location>
</feature>
<feature type="domain" description="CUB 2" evidence="3">
    <location>
        <begin position="539"/>
        <end position="649"/>
    </location>
</feature>
<feature type="domain" description="LDL-receptor class A 2" evidence="4">
    <location>
        <begin position="656"/>
        <end position="694"/>
    </location>
</feature>
<feature type="domain" description="SRCR" evidence="7">
    <location>
        <begin position="693"/>
        <end position="786"/>
    </location>
</feature>
<feature type="domain" description="Peptidase S1" evidence="8">
    <location>
        <begin position="800"/>
        <end position="1034"/>
    </location>
</feature>
<feature type="active site" description="Charge relay system" evidence="1">
    <location>
        <position position="840"/>
    </location>
</feature>
<feature type="active site" description="Charge relay system" evidence="1">
    <location>
        <position position="891"/>
    </location>
</feature>
<feature type="active site" description="Charge relay system" evidence="1">
    <location>
        <position position="986"/>
    </location>
</feature>
<feature type="glycosylation site" description="N-linked (GlcNAc...) asparagine" evidence="2">
    <location>
        <position position="116"/>
    </location>
</feature>
<feature type="glycosylation site" description="N-linked (GlcNAc...) asparagine" evidence="2">
    <location>
        <position position="147"/>
    </location>
</feature>
<feature type="glycosylation site" description="N-linked (GlcNAc...) asparagine" evidence="2">
    <location>
        <position position="170"/>
    </location>
</feature>
<feature type="glycosylation site" description="N-linked (GlcNAc...) asparagine" evidence="2">
    <location>
        <position position="194"/>
    </location>
</feature>
<feature type="glycosylation site" description="N-linked (GlcNAc...) asparagine" evidence="2">
    <location>
        <position position="283"/>
    </location>
</feature>
<feature type="glycosylation site" description="N-linked (GlcNAc...) asparagine" evidence="2">
    <location>
        <position position="343"/>
    </location>
</feature>
<feature type="glycosylation site" description="N-linked (GlcNAc...) asparagine" evidence="2">
    <location>
        <position position="350"/>
    </location>
</feature>
<feature type="glycosylation site" description="N-linked (GlcNAc...) asparagine" evidence="2">
    <location>
        <position position="403"/>
    </location>
</feature>
<feature type="glycosylation site" description="N-linked (GlcNAc...) asparagine" evidence="2">
    <location>
        <position position="455"/>
    </location>
</feature>
<feature type="glycosylation site" description="N-linked (GlcNAc...) asparagine" evidence="2">
    <location>
        <position position="485"/>
    </location>
</feature>
<feature type="glycosylation site" description="N-linked (GlcNAc...) asparagine" evidence="2">
    <location>
        <position position="518"/>
    </location>
</feature>
<feature type="glycosylation site" description="N-linked (GlcNAc...) asparagine" evidence="2">
    <location>
        <position position="549"/>
    </location>
</feature>
<feature type="glycosylation site" description="N-linked (GlcNAc...) asparagine" evidence="2">
    <location>
        <position position="645"/>
    </location>
</feature>
<feature type="glycosylation site" description="N-linked (GlcNAc...) asparagine" evidence="2">
    <location>
        <position position="697"/>
    </location>
</feature>
<feature type="glycosylation site" description="N-linked (GlcNAc...) asparagine" evidence="2">
    <location>
        <position position="701"/>
    </location>
</feature>
<feature type="glycosylation site" description="N-linked (GlcNAc...) asparagine" evidence="2">
    <location>
        <position position="721"/>
    </location>
</feature>
<feature type="glycosylation site" description="N-linked (GlcNAc...) asparagine" evidence="2">
    <location>
        <position position="740"/>
    </location>
</feature>
<feature type="glycosylation site" description="N-linked (GlcNAc...) asparagine" evidence="2">
    <location>
        <position position="761"/>
    </location>
</feature>
<feature type="glycosylation site" description="N-linked (GlcNAc...) asparagine" evidence="2">
    <location>
        <position position="804"/>
    </location>
</feature>
<feature type="glycosylation site" description="N-linked (GlcNAc...) asparagine" evidence="2">
    <location>
        <position position="863"/>
    </location>
</feature>
<feature type="glycosylation site" description="N-linked (GlcNAc...) asparagine" evidence="2">
    <location>
        <position position="902"/>
    </location>
</feature>
<feature type="glycosylation site" description="N-linked (GlcNAc...) asparagine" evidence="2">
    <location>
        <position position="964"/>
    </location>
</feature>
<feature type="disulfide bond" evidence="1">
    <location>
        <begin position="199"/>
        <end position="212"/>
    </location>
</feature>
<feature type="disulfide bond" evidence="1">
    <location>
        <begin position="206"/>
        <end position="225"/>
    </location>
</feature>
<feature type="disulfide bond" evidence="1">
    <location>
        <begin position="219"/>
        <end position="236"/>
    </location>
</feature>
<feature type="disulfide bond" evidence="1">
    <location>
        <begin position="240"/>
        <end position="268"/>
    </location>
</feature>
<feature type="disulfide bond" evidence="1">
    <location>
        <begin position="539"/>
        <end position="567"/>
    </location>
</feature>
<feature type="disulfide bond" evidence="1">
    <location>
        <begin position="658"/>
        <end position="670"/>
    </location>
</feature>
<feature type="disulfide bond" evidence="1">
    <location>
        <begin position="665"/>
        <end position="683"/>
    </location>
</feature>
<feature type="disulfide bond" evidence="1">
    <location>
        <begin position="677"/>
        <end position="692"/>
    </location>
</feature>
<feature type="disulfide bond" evidence="1">
    <location>
        <begin position="772"/>
        <end position="782"/>
    </location>
</feature>
<feature type="disulfide bond" description="Interchain (between heavy and light chains)" evidence="3 4 7 8">
    <location>
        <begin position="787"/>
        <end position="911"/>
    </location>
</feature>
<feature type="disulfide bond" evidence="1">
    <location>
        <begin position="825"/>
        <end position="841"/>
    </location>
</feature>
<feature type="disulfide bond" evidence="1">
    <location>
        <begin position="925"/>
        <end position="992"/>
    </location>
</feature>
<feature type="disulfide bond" evidence="1">
    <location>
        <begin position="956"/>
        <end position="971"/>
    </location>
</feature>
<feature type="disulfide bond" evidence="1">
    <location>
        <begin position="982"/>
        <end position="1010"/>
    </location>
</feature>
<comment type="function">
    <text>Responsible for initiating activation of pancreatic proteolytic proenzymes (trypsin, chymotrypsin and carboxypeptidase A). It catalyzes the conversion of trypsinogen to trypsin which in turn activates other proenzymes including chymotrypsinogen, procarboxypeptidases, and proelastases.</text>
</comment>
<comment type="catalytic activity">
    <reaction>
        <text>Activation of trypsinogen by selective cleavage of 6-Lys-|-Ile-7 bond.</text>
        <dbReference type="EC" id="3.4.21.9"/>
    </reaction>
</comment>
<comment type="subunit">
    <text>Heterotrimer of a catalytic (light) chain, a multidomain (heavy) chain, and a mini chain.</text>
</comment>
<comment type="subcellular location">
    <subcellularLocation>
        <location evidence="9">Membrane</location>
        <topology evidence="9">Single-pass type II membrane protein</topology>
    </subcellularLocation>
</comment>
<comment type="PTM">
    <text>The chains are derived from a single precursor that is cleaved by a trypsin-like protease.</text>
</comment>
<comment type="PTM">
    <text>The mini chain may be cleaved by elastase.</text>
</comment>
<comment type="similarity">
    <text evidence="8">Belongs to the peptidase S1 family.</text>
</comment>
<name>ENTK_PIG</name>
<gene>
    <name type="primary">TMPRSS15</name>
    <name type="synonym">ENTK</name>
    <name type="synonym">PRSS7</name>
</gene>
<proteinExistence type="evidence at protein level"/>
<dbReference type="EC" id="3.4.21.9"/>
<dbReference type="EMBL" id="D30799">
    <property type="protein sequence ID" value="BAA06459.1"/>
    <property type="molecule type" value="mRNA"/>
</dbReference>
<dbReference type="PIR" id="A53663">
    <property type="entry name" value="A53663"/>
</dbReference>
<dbReference type="RefSeq" id="NP_001001259.1">
    <property type="nucleotide sequence ID" value="NM_001001259.1"/>
</dbReference>
<dbReference type="SMR" id="P98074"/>
<dbReference type="FunCoup" id="P98074">
    <property type="interactions" value="135"/>
</dbReference>
<dbReference type="STRING" id="9823.ENSSSCP00000069010"/>
<dbReference type="MEROPS" id="S01.156"/>
<dbReference type="GlyCosmos" id="P98074">
    <property type="glycosylation" value="22 sites, No reported glycans"/>
</dbReference>
<dbReference type="GlyGen" id="P98074">
    <property type="glycosylation" value="23 sites"/>
</dbReference>
<dbReference type="PaxDb" id="9823-ENSSSCP00000012801"/>
<dbReference type="GeneID" id="397152"/>
<dbReference type="KEGG" id="ssc:397152"/>
<dbReference type="CTD" id="5651"/>
<dbReference type="eggNOG" id="KOG3627">
    <property type="taxonomic scope" value="Eukaryota"/>
</dbReference>
<dbReference type="InParanoid" id="P98074"/>
<dbReference type="OrthoDB" id="425190at2759"/>
<dbReference type="BRENDA" id="3.4.21.9">
    <property type="organism ID" value="6170"/>
</dbReference>
<dbReference type="Proteomes" id="UP000008227">
    <property type="component" value="Unplaced"/>
</dbReference>
<dbReference type="Proteomes" id="UP000314985">
    <property type="component" value="Unplaced"/>
</dbReference>
<dbReference type="Proteomes" id="UP000694570">
    <property type="component" value="Unplaced"/>
</dbReference>
<dbReference type="Proteomes" id="UP000694571">
    <property type="component" value="Unplaced"/>
</dbReference>
<dbReference type="Proteomes" id="UP000694720">
    <property type="component" value="Unplaced"/>
</dbReference>
<dbReference type="Proteomes" id="UP000694722">
    <property type="component" value="Unplaced"/>
</dbReference>
<dbReference type="Proteomes" id="UP000694723">
    <property type="component" value="Unplaced"/>
</dbReference>
<dbReference type="Proteomes" id="UP000694724">
    <property type="component" value="Unplaced"/>
</dbReference>
<dbReference type="Proteomes" id="UP000694725">
    <property type="component" value="Unplaced"/>
</dbReference>
<dbReference type="Proteomes" id="UP000694726">
    <property type="component" value="Unplaced"/>
</dbReference>
<dbReference type="Proteomes" id="UP000694727">
    <property type="component" value="Unplaced"/>
</dbReference>
<dbReference type="Proteomes" id="UP000694728">
    <property type="component" value="Unplaced"/>
</dbReference>
<dbReference type="GO" id="GO:0016020">
    <property type="term" value="C:membrane"/>
    <property type="evidence" value="ECO:0000318"/>
    <property type="project" value="GO_Central"/>
</dbReference>
<dbReference type="GO" id="GO:0004252">
    <property type="term" value="F:serine-type endopeptidase activity"/>
    <property type="evidence" value="ECO:0007669"/>
    <property type="project" value="UniProtKB-EC"/>
</dbReference>
<dbReference type="GO" id="GO:0006508">
    <property type="term" value="P:proteolysis"/>
    <property type="evidence" value="ECO:0007669"/>
    <property type="project" value="UniProtKB-KW"/>
</dbReference>
<dbReference type="CDD" id="cd00041">
    <property type="entry name" value="CUB"/>
    <property type="match status" value="2"/>
</dbReference>
<dbReference type="CDD" id="cd00112">
    <property type="entry name" value="LDLa"/>
    <property type="match status" value="2"/>
</dbReference>
<dbReference type="CDD" id="cd06263">
    <property type="entry name" value="MAM"/>
    <property type="match status" value="1"/>
</dbReference>
<dbReference type="CDD" id="cd00190">
    <property type="entry name" value="Tryp_SPc"/>
    <property type="match status" value="1"/>
</dbReference>
<dbReference type="FunFam" id="2.60.120.290:FF:000043">
    <property type="entry name" value="Enteropeptidase"/>
    <property type="match status" value="1"/>
</dbReference>
<dbReference type="FunFam" id="3.10.250.10:FF:000029">
    <property type="entry name" value="Enteropeptidase"/>
    <property type="match status" value="1"/>
</dbReference>
<dbReference type="FunFam" id="3.30.70.960:FF:000007">
    <property type="entry name" value="Enteropeptidase"/>
    <property type="match status" value="1"/>
</dbReference>
<dbReference type="FunFam" id="4.10.400.10:FF:000144">
    <property type="entry name" value="enteropeptidase"/>
    <property type="match status" value="1"/>
</dbReference>
<dbReference type="FunFam" id="2.60.120.200:FF:000128">
    <property type="entry name" value="enteropeptidase isoform X2"/>
    <property type="match status" value="1"/>
</dbReference>
<dbReference type="FunFam" id="2.60.120.290:FF:000038">
    <property type="entry name" value="enteropeptidase isoform X2"/>
    <property type="match status" value="1"/>
</dbReference>
<dbReference type="FunFam" id="4.10.400.10:FF:000149">
    <property type="entry name" value="enteropeptidase isoform X2"/>
    <property type="match status" value="1"/>
</dbReference>
<dbReference type="FunFam" id="2.40.10.10:FF:000003">
    <property type="entry name" value="Transmembrane serine protease 3"/>
    <property type="match status" value="1"/>
</dbReference>
<dbReference type="Gene3D" id="2.60.120.200">
    <property type="match status" value="1"/>
</dbReference>
<dbReference type="Gene3D" id="4.10.400.10">
    <property type="entry name" value="Low-density Lipoprotein Receptor"/>
    <property type="match status" value="2"/>
</dbReference>
<dbReference type="Gene3D" id="3.30.70.960">
    <property type="entry name" value="SEA domain"/>
    <property type="match status" value="1"/>
</dbReference>
<dbReference type="Gene3D" id="2.60.120.290">
    <property type="entry name" value="Spermadhesin, CUB domain"/>
    <property type="match status" value="2"/>
</dbReference>
<dbReference type="Gene3D" id="3.10.250.10">
    <property type="entry name" value="SRCR-like domain"/>
    <property type="match status" value="1"/>
</dbReference>
<dbReference type="Gene3D" id="2.40.10.10">
    <property type="entry name" value="Trypsin-like serine proteases"/>
    <property type="match status" value="2"/>
</dbReference>
<dbReference type="InterPro" id="IPR013320">
    <property type="entry name" value="ConA-like_dom_sf"/>
</dbReference>
<dbReference type="InterPro" id="IPR000859">
    <property type="entry name" value="CUB_dom"/>
</dbReference>
<dbReference type="InterPro" id="IPR036055">
    <property type="entry name" value="LDL_receptor-like_sf"/>
</dbReference>
<dbReference type="InterPro" id="IPR023415">
    <property type="entry name" value="LDLR_class-A_CS"/>
</dbReference>
<dbReference type="InterPro" id="IPR002172">
    <property type="entry name" value="LDrepeatLR_classA_rpt"/>
</dbReference>
<dbReference type="InterPro" id="IPR000998">
    <property type="entry name" value="MAM_dom"/>
</dbReference>
<dbReference type="InterPro" id="IPR011163">
    <property type="entry name" value="Pept_S1A_enterop"/>
</dbReference>
<dbReference type="InterPro" id="IPR009003">
    <property type="entry name" value="Peptidase_S1_PA"/>
</dbReference>
<dbReference type="InterPro" id="IPR043504">
    <property type="entry name" value="Peptidase_S1_PA_chymotrypsin"/>
</dbReference>
<dbReference type="InterPro" id="IPR001314">
    <property type="entry name" value="Peptidase_S1A"/>
</dbReference>
<dbReference type="InterPro" id="IPR000082">
    <property type="entry name" value="SEA_dom"/>
</dbReference>
<dbReference type="InterPro" id="IPR036364">
    <property type="entry name" value="SEA_dom_sf"/>
</dbReference>
<dbReference type="InterPro" id="IPR035914">
    <property type="entry name" value="Sperma_CUB_dom_sf"/>
</dbReference>
<dbReference type="InterPro" id="IPR001190">
    <property type="entry name" value="SRCR"/>
</dbReference>
<dbReference type="InterPro" id="IPR036772">
    <property type="entry name" value="SRCR-like_dom_sf"/>
</dbReference>
<dbReference type="InterPro" id="IPR001254">
    <property type="entry name" value="Trypsin_dom"/>
</dbReference>
<dbReference type="InterPro" id="IPR018114">
    <property type="entry name" value="TRYPSIN_HIS"/>
</dbReference>
<dbReference type="InterPro" id="IPR033116">
    <property type="entry name" value="TRYPSIN_SER"/>
</dbReference>
<dbReference type="PANTHER" id="PTHR24252">
    <property type="entry name" value="ACROSIN-RELATED"/>
    <property type="match status" value="1"/>
</dbReference>
<dbReference type="PANTHER" id="PTHR24252:SF16">
    <property type="entry name" value="TRANSMEMBRANE SERINE PROTEASE 15"/>
    <property type="match status" value="1"/>
</dbReference>
<dbReference type="Pfam" id="PF00431">
    <property type="entry name" value="CUB"/>
    <property type="match status" value="2"/>
</dbReference>
<dbReference type="Pfam" id="PF00057">
    <property type="entry name" value="Ldl_recept_a"/>
    <property type="match status" value="1"/>
</dbReference>
<dbReference type="Pfam" id="PF00629">
    <property type="entry name" value="MAM"/>
    <property type="match status" value="1"/>
</dbReference>
<dbReference type="Pfam" id="PF01390">
    <property type="entry name" value="SEA"/>
    <property type="match status" value="1"/>
</dbReference>
<dbReference type="Pfam" id="PF00530">
    <property type="entry name" value="SRCR"/>
    <property type="match status" value="1"/>
</dbReference>
<dbReference type="Pfam" id="PF00089">
    <property type="entry name" value="Trypsin"/>
    <property type="match status" value="1"/>
</dbReference>
<dbReference type="PIRSF" id="PIRSF001138">
    <property type="entry name" value="Enteropeptidase"/>
    <property type="match status" value="1"/>
</dbReference>
<dbReference type="PRINTS" id="PR00722">
    <property type="entry name" value="CHYMOTRYPSIN"/>
</dbReference>
<dbReference type="SMART" id="SM00042">
    <property type="entry name" value="CUB"/>
    <property type="match status" value="2"/>
</dbReference>
<dbReference type="SMART" id="SM00192">
    <property type="entry name" value="LDLa"/>
    <property type="match status" value="2"/>
</dbReference>
<dbReference type="SMART" id="SM00137">
    <property type="entry name" value="MAM"/>
    <property type="match status" value="1"/>
</dbReference>
<dbReference type="SMART" id="SM00200">
    <property type="entry name" value="SEA"/>
    <property type="match status" value="1"/>
</dbReference>
<dbReference type="SMART" id="SM00202">
    <property type="entry name" value="SR"/>
    <property type="match status" value="1"/>
</dbReference>
<dbReference type="SMART" id="SM00020">
    <property type="entry name" value="Tryp_SPc"/>
    <property type="match status" value="1"/>
</dbReference>
<dbReference type="SUPFAM" id="SSF49899">
    <property type="entry name" value="Concanavalin A-like lectins/glucanases"/>
    <property type="match status" value="1"/>
</dbReference>
<dbReference type="SUPFAM" id="SSF57424">
    <property type="entry name" value="LDL receptor-like module"/>
    <property type="match status" value="2"/>
</dbReference>
<dbReference type="SUPFAM" id="SSF82671">
    <property type="entry name" value="SEA domain"/>
    <property type="match status" value="1"/>
</dbReference>
<dbReference type="SUPFAM" id="SSF49854">
    <property type="entry name" value="Spermadhesin, CUB domain"/>
    <property type="match status" value="2"/>
</dbReference>
<dbReference type="SUPFAM" id="SSF56487">
    <property type="entry name" value="SRCR-like"/>
    <property type="match status" value="1"/>
</dbReference>
<dbReference type="SUPFAM" id="SSF50494">
    <property type="entry name" value="Trypsin-like serine proteases"/>
    <property type="match status" value="1"/>
</dbReference>
<dbReference type="PROSITE" id="PS01180">
    <property type="entry name" value="CUB"/>
    <property type="match status" value="2"/>
</dbReference>
<dbReference type="PROSITE" id="PS01209">
    <property type="entry name" value="LDLRA_1"/>
    <property type="match status" value="2"/>
</dbReference>
<dbReference type="PROSITE" id="PS50068">
    <property type="entry name" value="LDLRA_2"/>
    <property type="match status" value="2"/>
</dbReference>
<dbReference type="PROSITE" id="PS00740">
    <property type="entry name" value="MAM_1"/>
    <property type="match status" value="1"/>
</dbReference>
<dbReference type="PROSITE" id="PS50060">
    <property type="entry name" value="MAM_2"/>
    <property type="match status" value="1"/>
</dbReference>
<dbReference type="PROSITE" id="PS50024">
    <property type="entry name" value="SEA"/>
    <property type="match status" value="1"/>
</dbReference>
<dbReference type="PROSITE" id="PS00420">
    <property type="entry name" value="SRCR_1"/>
    <property type="match status" value="1"/>
</dbReference>
<dbReference type="PROSITE" id="PS50287">
    <property type="entry name" value="SRCR_2"/>
    <property type="match status" value="1"/>
</dbReference>
<dbReference type="PROSITE" id="PS50240">
    <property type="entry name" value="TRYPSIN_DOM"/>
    <property type="match status" value="1"/>
</dbReference>
<dbReference type="PROSITE" id="PS00134">
    <property type="entry name" value="TRYPSIN_HIS"/>
    <property type="match status" value="1"/>
</dbReference>
<dbReference type="PROSITE" id="PS00135">
    <property type="entry name" value="TRYPSIN_SER"/>
    <property type="match status" value="1"/>
</dbReference>
<evidence type="ECO:0000250" key="1"/>
<evidence type="ECO:0000255" key="2"/>
<evidence type="ECO:0000255" key="3">
    <source>
        <dbReference type="PROSITE-ProRule" id="PRU00059"/>
    </source>
</evidence>
<evidence type="ECO:0000255" key="4">
    <source>
        <dbReference type="PROSITE-ProRule" id="PRU00124"/>
    </source>
</evidence>
<evidence type="ECO:0000255" key="5">
    <source>
        <dbReference type="PROSITE-ProRule" id="PRU00128"/>
    </source>
</evidence>
<evidence type="ECO:0000255" key="6">
    <source>
        <dbReference type="PROSITE-ProRule" id="PRU00188"/>
    </source>
</evidence>
<evidence type="ECO:0000255" key="7">
    <source>
        <dbReference type="PROSITE-ProRule" id="PRU00196"/>
    </source>
</evidence>
<evidence type="ECO:0000255" key="8">
    <source>
        <dbReference type="PROSITE-ProRule" id="PRU00274"/>
    </source>
</evidence>
<evidence type="ECO:0000305" key="9"/>
<organism>
    <name type="scientific">Sus scrofa</name>
    <name type="common">Pig</name>
    <dbReference type="NCBI Taxonomy" id="9823"/>
    <lineage>
        <taxon>Eukaryota</taxon>
        <taxon>Metazoa</taxon>
        <taxon>Chordata</taxon>
        <taxon>Craniata</taxon>
        <taxon>Vertebrata</taxon>
        <taxon>Euteleostomi</taxon>
        <taxon>Mammalia</taxon>
        <taxon>Eutheria</taxon>
        <taxon>Laurasiatheria</taxon>
        <taxon>Artiodactyla</taxon>
        <taxon>Suina</taxon>
        <taxon>Suidae</taxon>
        <taxon>Sus</taxon>
    </lineage>
</organism>
<protein>
    <recommendedName>
        <fullName>Enteropeptidase</fullName>
        <ecNumber>3.4.21.9</ecNumber>
    </recommendedName>
    <alternativeName>
        <fullName>Enterokinase</fullName>
    </alternativeName>
    <alternativeName>
        <fullName>Serine protease 7</fullName>
    </alternativeName>
    <alternativeName>
        <fullName>Transmembrane protease serine 15</fullName>
    </alternativeName>
    <component>
        <recommendedName>
            <fullName>Enteropeptidase non-catalytic mini chain</fullName>
        </recommendedName>
    </component>
    <component>
        <recommendedName>
            <fullName>Enteropeptidase non-catalytic heavy chain</fullName>
        </recommendedName>
    </component>
    <component>
        <recommendedName>
            <fullName>Enteropeptidase catalytic light chain</fullName>
        </recommendedName>
    </component>
</protein>
<reference key="1">
    <citation type="journal article" date="1994" name="J. Biol. Chem.">
        <title>Structural characterization of porcine enteropeptidase.</title>
        <authorList>
            <person name="Matsushima M."/>
            <person name="Ichinose M."/>
            <person name="Yahagi N."/>
            <person name="Kakei N."/>
            <person name="Tsukada S."/>
            <person name="Miki K."/>
            <person name="Kurokawa K."/>
            <person name="Tashiro K."/>
            <person name="Shiokawa K."/>
            <person name="Shinomiya K."/>
            <person name="Umeyama H."/>
            <person name="Inoue H."/>
            <person name="Takahashi T."/>
            <person name="Takahashi K."/>
        </authorList>
    </citation>
    <scope>NUCLEOTIDE SEQUENCE [MRNA]</scope>
    <scope>PARTIAL PROTEIN SEQUENCE</scope>
    <source>
        <tissue>Duodenal mucosa</tissue>
    </source>
</reference>
<accession>P98074</accession>
<sequence length="1034" mass="114776">MGSKRIIPSRHRSLSTYEVMFTALFAILMVLCAGLIAVSWLTIKGSEKDAALGKSHEARGTMKITSGVTYNPNLQDKLSVDFKVLAFDIQQMIGEIFQSSNLKNEYKNSRVLQFENGSVIVIFDLLFAQWVSDENIKEELIQGIEANKSSQLVAFHIDVNSIDITESLENYSTTSPSTTSDKLTTSSPPATPGNVSIECLPGSRPCADALKCIAVDLFCDGELNCPDGSDEDSKICATACDGKFLLTESSGSFDAAQYPKLSEASVVCQWIIRVNQGLSIELNFSYFNTYSMDVLNIYEGVGSSKILRASLWLMNPGTIRIFSNQVTVTFLIESDENDYIGFNATYTAFNSTELNNDEKINCNFEDGFCFWIQDLNDDNEWERIQGTTFPPFTGPNFDHTFGNASGFYISTPTGPGGRQERVGLLSLPLEPTLEPVCLSFWYYMYGENVYKLSINISNDQNIEKIIFQKEGNYGENWNYGQVTLNETVEFKVAFNAFKNQFLSDIALDDISLTYGICNVSLYPEPTLVPTSPPELPTDCGGPFELWEPNTTFTSMNFPNNYPNQAFCVWNLNAQKGKNIQLHFEEFDLENIADVVEIRDGEEDDSLLLAVYTGPGPVEDVFSTTNRMTVLFITNDALTKGGFKANFTTGYHLGIPEPCKEDNFQCENGECVLLVNLCDGFSHCKDGSDEAHCVRFLNGTANNSGLVQFRIQSIWHTACAENWTTQTSDDVCQLLGLGTGNSSMPFFSSGGGPFVKLNTAPNGSLILTASEQCFEDSLILLQCNHKSCGKKQVAQEVSPKIVGGNDSREGAWPWVVALYYNGQLLCGASLVSRDWLVSAAHCVYGRNLEPSKWKAILGLHMTSNLTSPQIVTRLIDEIVINPHYNRRRKDSDIAMMHLEFKVNYTDYIQPICLPEENQVFPPGRICSIAGWGKVIYQGSPADILQEADVPLLSNEKCQQQMPEYNITENMMCAGYEEGGIDSCQGDSGGPLMCLENNRWLLAGVTSFGYQCALPNRPGVYARVPKFTEWIQSFLH</sequence>
<keyword id="KW-0903">Direct protein sequencing</keyword>
<keyword id="KW-1015">Disulfide bond</keyword>
<keyword id="KW-0325">Glycoprotein</keyword>
<keyword id="KW-0378">Hydrolase</keyword>
<keyword id="KW-0472">Membrane</keyword>
<keyword id="KW-0645">Protease</keyword>
<keyword id="KW-1185">Reference proteome</keyword>
<keyword id="KW-0677">Repeat</keyword>
<keyword id="KW-0720">Serine protease</keyword>
<keyword id="KW-0735">Signal-anchor</keyword>
<keyword id="KW-0812">Transmembrane</keyword>
<keyword id="KW-1133">Transmembrane helix</keyword>
<keyword id="KW-0865">Zymogen</keyword>